<feature type="chain" id="PRO_1000064942" description="Tetrahydromethanopterin S-methyltransferase subunit E">
    <location>
        <begin position="1"/>
        <end position="300"/>
    </location>
</feature>
<feature type="transmembrane region" description="Helical" evidence="1">
    <location>
        <begin position="62"/>
        <end position="82"/>
    </location>
</feature>
<feature type="transmembrane region" description="Helical" evidence="1">
    <location>
        <begin position="86"/>
        <end position="106"/>
    </location>
</feature>
<feature type="transmembrane region" description="Helical" evidence="1">
    <location>
        <begin position="135"/>
        <end position="155"/>
    </location>
</feature>
<feature type="transmembrane region" description="Helical" evidence="1">
    <location>
        <begin position="158"/>
        <end position="178"/>
    </location>
</feature>
<feature type="transmembrane region" description="Helical" evidence="1">
    <location>
        <begin position="226"/>
        <end position="246"/>
    </location>
</feature>
<feature type="transmembrane region" description="Helical" evidence="1">
    <location>
        <begin position="261"/>
        <end position="281"/>
    </location>
</feature>
<sequence length="300" mass="31143">MDPTLLALGALALSGAAATVAGCAEDLESDVGSQSNPNSQVQLGPQMGNIHRYFNKAISGEPVSYGLYVAAAGATAWALMGMNLNPILAIIVGSAVAALVHGAYSVSAFLGRIVGQSKNFGQPVYMDVMMGHLGPIVGHGFIAVFCMLFAAYLAVNALGNPFPLPLVALIFGITVGAIGSSTGDVHYGAEREYQKYAFGGGIPVANQGDIDIMAETGIRNGLDSSYFCSKLGGPLTGLAFGLIIFLDGWRSILGNIIGGDLITKAAIAIVVGLIVVITTLLLNRKIEVYARNKFGPYTDR</sequence>
<protein>
    <recommendedName>
        <fullName evidence="1">Tetrahydromethanopterin S-methyltransferase subunit E</fullName>
        <ecNumber evidence="1">7.2.1.4</ecNumber>
    </recommendedName>
    <alternativeName>
        <fullName evidence="1">N5-methyltetrahydromethanopterin--coenzyme M methyltransferase subunit E</fullName>
    </alternativeName>
</protein>
<evidence type="ECO:0000255" key="1">
    <source>
        <dbReference type="HAMAP-Rule" id="MF_01098"/>
    </source>
</evidence>
<name>MTRE_META3</name>
<dbReference type="EC" id="7.2.1.4" evidence="1"/>
<dbReference type="EMBL" id="CP000743">
    <property type="protein sequence ID" value="ABR56845.1"/>
    <property type="molecule type" value="Genomic_DNA"/>
</dbReference>
<dbReference type="RefSeq" id="WP_011973977.1">
    <property type="nucleotide sequence ID" value="NC_009635.1"/>
</dbReference>
<dbReference type="SMR" id="A6UWH3"/>
<dbReference type="STRING" id="419665.Maeo_1269"/>
<dbReference type="GeneID" id="5326487"/>
<dbReference type="GeneID" id="75304733"/>
<dbReference type="KEGG" id="mae:Maeo_1269"/>
<dbReference type="eggNOG" id="arCOG04870">
    <property type="taxonomic scope" value="Archaea"/>
</dbReference>
<dbReference type="HOGENOM" id="CLU_958513_0_0_2"/>
<dbReference type="OrthoDB" id="82302at2157"/>
<dbReference type="UniPathway" id="UPA00640">
    <property type="reaction ID" value="UER00698"/>
</dbReference>
<dbReference type="Proteomes" id="UP000001106">
    <property type="component" value="Chromosome"/>
</dbReference>
<dbReference type="GO" id="GO:0005737">
    <property type="term" value="C:cytoplasm"/>
    <property type="evidence" value="ECO:0007669"/>
    <property type="project" value="InterPro"/>
</dbReference>
<dbReference type="GO" id="GO:0005886">
    <property type="term" value="C:plasma membrane"/>
    <property type="evidence" value="ECO:0007669"/>
    <property type="project" value="UniProtKB-SubCell"/>
</dbReference>
<dbReference type="GO" id="GO:0012506">
    <property type="term" value="C:vesicle membrane"/>
    <property type="evidence" value="ECO:0007669"/>
    <property type="project" value="InterPro"/>
</dbReference>
<dbReference type="GO" id="GO:0030269">
    <property type="term" value="F:tetrahydromethanopterin S-methyltransferase activity"/>
    <property type="evidence" value="ECO:0007669"/>
    <property type="project" value="UniProtKB-UniRule"/>
</dbReference>
<dbReference type="GO" id="GO:0019386">
    <property type="term" value="P:methanogenesis, from carbon dioxide"/>
    <property type="evidence" value="ECO:0007669"/>
    <property type="project" value="UniProtKB-UniRule"/>
</dbReference>
<dbReference type="GO" id="GO:0032259">
    <property type="term" value="P:methylation"/>
    <property type="evidence" value="ECO:0007669"/>
    <property type="project" value="UniProtKB-KW"/>
</dbReference>
<dbReference type="GO" id="GO:0006730">
    <property type="term" value="P:one-carbon metabolic process"/>
    <property type="evidence" value="ECO:0007669"/>
    <property type="project" value="UniProtKB-UniRule"/>
</dbReference>
<dbReference type="HAMAP" id="MF_01098">
    <property type="entry name" value="MtrE"/>
    <property type="match status" value="1"/>
</dbReference>
<dbReference type="InterPro" id="IPR005780">
    <property type="entry name" value="MeTrfase_E"/>
</dbReference>
<dbReference type="NCBIfam" id="TIGR01113">
    <property type="entry name" value="mtrE"/>
    <property type="match status" value="1"/>
</dbReference>
<dbReference type="Pfam" id="PF04206">
    <property type="entry name" value="MtrE"/>
    <property type="match status" value="1"/>
</dbReference>
<dbReference type="PIRSF" id="PIRSF016509">
    <property type="entry name" value="MtrE"/>
    <property type="match status" value="1"/>
</dbReference>
<gene>
    <name evidence="1" type="primary">mtrE</name>
    <name type="ordered locus">Maeo_1269</name>
</gene>
<organism>
    <name type="scientific">Methanococcus aeolicus (strain ATCC BAA-1280 / DSM 17508 / OCM 812 / Nankai-3)</name>
    <dbReference type="NCBI Taxonomy" id="419665"/>
    <lineage>
        <taxon>Archaea</taxon>
        <taxon>Methanobacteriati</taxon>
        <taxon>Methanobacteriota</taxon>
        <taxon>Methanomada group</taxon>
        <taxon>Methanococci</taxon>
        <taxon>Methanococcales</taxon>
        <taxon>Methanococcaceae</taxon>
        <taxon>Methanococcus</taxon>
    </lineage>
</organism>
<reference key="1">
    <citation type="submission" date="2007-06" db="EMBL/GenBank/DDBJ databases">
        <title>Complete sequence of Methanococcus aeolicus Nankai-3.</title>
        <authorList>
            <consortium name="US DOE Joint Genome Institute"/>
            <person name="Copeland A."/>
            <person name="Lucas S."/>
            <person name="Lapidus A."/>
            <person name="Barry K."/>
            <person name="Glavina del Rio T."/>
            <person name="Dalin E."/>
            <person name="Tice H."/>
            <person name="Pitluck S."/>
            <person name="Chain P."/>
            <person name="Malfatti S."/>
            <person name="Shin M."/>
            <person name="Vergez L."/>
            <person name="Schmutz J."/>
            <person name="Larimer F."/>
            <person name="Land M."/>
            <person name="Hauser L."/>
            <person name="Kyrpides N."/>
            <person name="Lykidis A."/>
            <person name="Sieprawska-Lupa M."/>
            <person name="Whitman W.B."/>
            <person name="Richardson P."/>
        </authorList>
    </citation>
    <scope>NUCLEOTIDE SEQUENCE [LARGE SCALE GENOMIC DNA]</scope>
    <source>
        <strain>ATCC BAA-1280 / DSM 17508 / OCM 812 / Nankai-3</strain>
    </source>
</reference>
<keyword id="KW-1003">Cell membrane</keyword>
<keyword id="KW-0472">Membrane</keyword>
<keyword id="KW-0484">Methanogenesis</keyword>
<keyword id="KW-0489">Methyltransferase</keyword>
<keyword id="KW-0554">One-carbon metabolism</keyword>
<keyword id="KW-0808">Transferase</keyword>
<keyword id="KW-1278">Translocase</keyword>
<keyword id="KW-0812">Transmembrane</keyword>
<keyword id="KW-1133">Transmembrane helix</keyword>
<proteinExistence type="inferred from homology"/>
<comment type="function">
    <text evidence="1">Part of a complex that catalyzes the formation of methyl-coenzyme M and tetrahydromethanopterin from coenzyme M and methyl-tetrahydromethanopterin. This is an energy-conserving, sodium-ion translocating step.</text>
</comment>
<comment type="catalytic activity">
    <reaction evidence="1">
        <text>5-methyl-5,6,7,8-tetrahydromethanopterin + coenzyme M + 2 Na(+)(in) = 5,6,7,8-tetrahydromethanopterin + methyl-coenzyme M + 2 Na(+)(out)</text>
        <dbReference type="Rhea" id="RHEA:53492"/>
        <dbReference type="ChEBI" id="CHEBI:29101"/>
        <dbReference type="ChEBI" id="CHEBI:58103"/>
        <dbReference type="ChEBI" id="CHEBI:58116"/>
        <dbReference type="ChEBI" id="CHEBI:58286"/>
        <dbReference type="ChEBI" id="CHEBI:58319"/>
        <dbReference type="EC" id="7.2.1.4"/>
    </reaction>
</comment>
<comment type="pathway">
    <text evidence="1">One-carbon metabolism; methanogenesis from CO(2); methyl-coenzyme M from 5,10-methylene-5,6,7,8-tetrahydromethanopterin: step 2/2.</text>
</comment>
<comment type="subunit">
    <text evidence="1">The complex is composed of 8 subunits; MtrA, MtrB, MtrC, MtrD, MtrE, MtrF, MtrG and MtrH.</text>
</comment>
<comment type="subcellular location">
    <subcellularLocation>
        <location evidence="1">Cell membrane</location>
        <topology evidence="1">Multi-pass membrane protein</topology>
    </subcellularLocation>
</comment>
<comment type="similarity">
    <text evidence="1">Belongs to the MtrE family.</text>
</comment>
<accession>A6UWH3</accession>